<comment type="function">
    <text evidence="1">Plasma membrane osmosensor that activates the high osmolarity glycerol (HOG) MAPK signaling pathway in response to high osmolarity.</text>
</comment>
<comment type="subunit">
    <text evidence="1">Forms homooligomers.</text>
</comment>
<comment type="subcellular location">
    <subcellularLocation>
        <location evidence="1">Cell membrane</location>
        <topology evidence="1">Multi-pass membrane protein</topology>
    </subcellularLocation>
</comment>
<comment type="similarity">
    <text evidence="5">Belongs to the SHO1 family.</text>
</comment>
<reference key="1">
    <citation type="journal article" date="2015" name="Genome Announc.">
        <title>Genome sequence of the AIDS-associated pathogen Penicillium marneffei (ATCC18224) and its near taxonomic relative Talaromyces stipitatus (ATCC10500).</title>
        <authorList>
            <person name="Nierman W.C."/>
            <person name="Fedorova-Abrams N.D."/>
            <person name="Andrianopoulos A."/>
        </authorList>
    </citation>
    <scope>NUCLEOTIDE SEQUENCE [LARGE SCALE GENOMIC DNA]</scope>
    <source>
        <strain>ATCC 10500 / CBS 375.48 / QM 6759 / NRRL 1006</strain>
    </source>
</reference>
<proteinExistence type="inferred from homology"/>
<evidence type="ECO:0000250" key="1"/>
<evidence type="ECO:0000255" key="2"/>
<evidence type="ECO:0000255" key="3">
    <source>
        <dbReference type="PROSITE-ProRule" id="PRU00192"/>
    </source>
</evidence>
<evidence type="ECO:0000256" key="4">
    <source>
        <dbReference type="SAM" id="MobiDB-lite"/>
    </source>
</evidence>
<evidence type="ECO:0000305" key="5"/>
<name>SHO1_TALSN</name>
<accession>B8MD74</accession>
<organism>
    <name type="scientific">Talaromyces stipitatus (strain ATCC 10500 / CBS 375.48 / QM 6759 / NRRL 1006)</name>
    <name type="common">Penicillium stipitatum</name>
    <dbReference type="NCBI Taxonomy" id="441959"/>
    <lineage>
        <taxon>Eukaryota</taxon>
        <taxon>Fungi</taxon>
        <taxon>Dikarya</taxon>
        <taxon>Ascomycota</taxon>
        <taxon>Pezizomycotina</taxon>
        <taxon>Eurotiomycetes</taxon>
        <taxon>Eurotiomycetidae</taxon>
        <taxon>Eurotiales</taxon>
        <taxon>Trichocomaceae</taxon>
        <taxon>Talaromyces</taxon>
        <taxon>Talaromyces sect. Talaromyces</taxon>
    </lineage>
</organism>
<dbReference type="EMBL" id="EQ962655">
    <property type="protein sequence ID" value="EED17599.1"/>
    <property type="molecule type" value="Genomic_DNA"/>
</dbReference>
<dbReference type="RefSeq" id="XP_002481591.1">
    <property type="nucleotide sequence ID" value="XM_002481546.1"/>
</dbReference>
<dbReference type="SMR" id="B8MD74"/>
<dbReference type="FunCoup" id="B8MD74">
    <property type="interactions" value="138"/>
</dbReference>
<dbReference type="STRING" id="441959.B8MD74"/>
<dbReference type="GeneID" id="8109175"/>
<dbReference type="VEuPathDB" id="FungiDB:TSTA_114130"/>
<dbReference type="eggNOG" id="ENOG502QW7A">
    <property type="taxonomic scope" value="Eukaryota"/>
</dbReference>
<dbReference type="HOGENOM" id="CLU_043316_1_0_1"/>
<dbReference type="InParanoid" id="B8MD74"/>
<dbReference type="OMA" id="NIVWIFY"/>
<dbReference type="OrthoDB" id="5983572at2759"/>
<dbReference type="PhylomeDB" id="B8MD74"/>
<dbReference type="Proteomes" id="UP000001745">
    <property type="component" value="Unassembled WGS sequence"/>
</dbReference>
<dbReference type="GO" id="GO:0005886">
    <property type="term" value="C:plasma membrane"/>
    <property type="evidence" value="ECO:0007669"/>
    <property type="project" value="UniProtKB-SubCell"/>
</dbReference>
<dbReference type="GO" id="GO:0030833">
    <property type="term" value="P:regulation of actin filament polymerization"/>
    <property type="evidence" value="ECO:0007669"/>
    <property type="project" value="TreeGrafter"/>
</dbReference>
<dbReference type="CDD" id="cd11855">
    <property type="entry name" value="SH3_Sho1p"/>
    <property type="match status" value="1"/>
</dbReference>
<dbReference type="FunFam" id="2.30.30.40:FF:000213">
    <property type="entry name" value="High osmolarity signaling protein SHO1"/>
    <property type="match status" value="1"/>
</dbReference>
<dbReference type="Gene3D" id="2.30.30.40">
    <property type="entry name" value="SH3 Domains"/>
    <property type="match status" value="1"/>
</dbReference>
<dbReference type="InterPro" id="IPR036028">
    <property type="entry name" value="SH3-like_dom_sf"/>
</dbReference>
<dbReference type="InterPro" id="IPR001452">
    <property type="entry name" value="SH3_domain"/>
</dbReference>
<dbReference type="InterPro" id="IPR035522">
    <property type="entry name" value="Sho1_SH3"/>
</dbReference>
<dbReference type="PANTHER" id="PTHR15735">
    <property type="entry name" value="FCH AND DOUBLE SH3 DOMAINS PROTEIN"/>
    <property type="match status" value="1"/>
</dbReference>
<dbReference type="PANTHER" id="PTHR15735:SF20">
    <property type="entry name" value="HIGH OSMOLARITY SIGNALING PROTEIN SHO1"/>
    <property type="match status" value="1"/>
</dbReference>
<dbReference type="Pfam" id="PF00018">
    <property type="entry name" value="SH3_1"/>
    <property type="match status" value="1"/>
</dbReference>
<dbReference type="PRINTS" id="PR00452">
    <property type="entry name" value="SH3DOMAIN"/>
</dbReference>
<dbReference type="SMART" id="SM00326">
    <property type="entry name" value="SH3"/>
    <property type="match status" value="1"/>
</dbReference>
<dbReference type="SUPFAM" id="SSF50044">
    <property type="entry name" value="SH3-domain"/>
    <property type="match status" value="1"/>
</dbReference>
<dbReference type="PROSITE" id="PS50002">
    <property type="entry name" value="SH3"/>
    <property type="match status" value="1"/>
</dbReference>
<gene>
    <name type="primary">sho1</name>
    <name type="ORF">TSTA_114130</name>
</gene>
<feature type="chain" id="PRO_0000410401" description="High osmolarity signaling protein sho1">
    <location>
        <begin position="1"/>
        <end position="281"/>
    </location>
</feature>
<feature type="topological domain" description="Cytoplasmic" evidence="2">
    <location>
        <begin position="1"/>
        <end position="14"/>
    </location>
</feature>
<feature type="transmembrane region" description="Helical" evidence="2">
    <location>
        <begin position="15"/>
        <end position="35"/>
    </location>
</feature>
<feature type="topological domain" description="Extracellular" evidence="2">
    <location>
        <begin position="36"/>
        <end position="44"/>
    </location>
</feature>
<feature type="transmembrane region" description="Helical" evidence="2">
    <location>
        <begin position="45"/>
        <end position="65"/>
    </location>
</feature>
<feature type="topological domain" description="Cytoplasmic" evidence="2">
    <location>
        <begin position="66"/>
        <end position="74"/>
    </location>
</feature>
<feature type="transmembrane region" description="Helical" evidence="2">
    <location>
        <begin position="75"/>
        <end position="95"/>
    </location>
</feature>
<feature type="topological domain" description="Extracellular" evidence="2">
    <location>
        <begin position="96"/>
        <end position="103"/>
    </location>
</feature>
<feature type="transmembrane region" description="Helical" evidence="2">
    <location>
        <begin position="104"/>
        <end position="124"/>
    </location>
</feature>
<feature type="topological domain" description="Cytoplasmic" evidence="2">
    <location>
        <begin position="125"/>
        <end position="281"/>
    </location>
</feature>
<feature type="domain" description="SH3" evidence="3">
    <location>
        <begin position="222"/>
        <end position="281"/>
    </location>
</feature>
<feature type="region of interest" description="Disordered" evidence="4">
    <location>
        <begin position="178"/>
        <end position="219"/>
    </location>
</feature>
<feature type="compositionally biased region" description="Polar residues" evidence="4">
    <location>
        <begin position="201"/>
        <end position="219"/>
    </location>
</feature>
<protein>
    <recommendedName>
        <fullName>High osmolarity signaling protein sho1</fullName>
    </recommendedName>
    <alternativeName>
        <fullName>Osmosensor sho1</fullName>
    </alternativeName>
</protein>
<sequence length="281" mass="30259">MPRFDPSNILGDPFALSTISISIIAWIISFIGSIIADVQTDFPNYAWWAVAYMICVIAGIIVVVGSDTTLIYSNAVVGYLSAGLAFTTLAVNSLVYQPQSSKQAAAAGFILLSMINIIWIFYFGSTPESSHRQAIDSLALNKVGNAYHNSRPASNAFGARPATTVSQPPQMYTSAQLNGFETSSPMSGYPGGPPGSDKRNTTATNFPPANVEPSNEVSQPTEYPYKAKAIYSYDANPDDANEISFTKGEELEVSDVSGRWWQARRANGETGIAPSNYLILL</sequence>
<keyword id="KW-1003">Cell membrane</keyword>
<keyword id="KW-0472">Membrane</keyword>
<keyword id="KW-1185">Reference proteome</keyword>
<keyword id="KW-0728">SH3 domain</keyword>
<keyword id="KW-0346">Stress response</keyword>
<keyword id="KW-0812">Transmembrane</keyword>
<keyword id="KW-1133">Transmembrane helix</keyword>